<reference key="1">
    <citation type="journal article" date="2006" name="Genome Biol.">
        <title>The genome of Rhizobium leguminosarum has recognizable core and accessory components.</title>
        <authorList>
            <person name="Young J.P.W."/>
            <person name="Crossman L.C."/>
            <person name="Johnston A.W.B."/>
            <person name="Thomson N.R."/>
            <person name="Ghazoui Z.F."/>
            <person name="Hull K.H."/>
            <person name="Wexler M."/>
            <person name="Curson A.R.J."/>
            <person name="Todd J.D."/>
            <person name="Poole P.S."/>
            <person name="Mauchline T.H."/>
            <person name="East A.K."/>
            <person name="Quail M.A."/>
            <person name="Churcher C."/>
            <person name="Arrowsmith C."/>
            <person name="Cherevach I."/>
            <person name="Chillingworth T."/>
            <person name="Clarke K."/>
            <person name="Cronin A."/>
            <person name="Davis P."/>
            <person name="Fraser A."/>
            <person name="Hance Z."/>
            <person name="Hauser H."/>
            <person name="Jagels K."/>
            <person name="Moule S."/>
            <person name="Mungall K."/>
            <person name="Norbertczak H."/>
            <person name="Rabbinowitsch E."/>
            <person name="Sanders M."/>
            <person name="Simmonds M."/>
            <person name="Whitehead S."/>
            <person name="Parkhill J."/>
        </authorList>
    </citation>
    <scope>NUCLEOTIDE SEQUENCE [LARGE SCALE GENOMIC DNA]</scope>
    <source>
        <strain>DSM 114642 / LMG 32736 / 3841</strain>
    </source>
</reference>
<reference key="2">
    <citation type="journal article" date="2009" name="Proc. Natl. Acad. Sci. U.S.A.">
        <title>Legumes regulate Rhizobium bacteroid development and persistence by the supply of branched-chain amino acids.</title>
        <authorList>
            <person name="Prell J."/>
            <person name="White J.P."/>
            <person name="Bourdes A."/>
            <person name="Bunnewell S."/>
            <person name="Bongaerts R.J."/>
            <person name="Poole P.S."/>
        </authorList>
    </citation>
    <scope>DISRUPTION PHENOTYPE</scope>
    <source>
        <strain evidence="3">DSM 114642 / LMG 32736 / 3841</strain>
    </source>
</reference>
<proteinExistence type="inferred from homology"/>
<comment type="function">
    <text evidence="1">Functions in the biosynthesis of branched-chain amino acids. Catalyzes the dehydration of (2R,3R)-2,3-dihydroxy-3-methylpentanoate (2,3-dihydroxy-3-methylvalerate) into 2-oxo-3-methylpentanoate (2-oxo-3-methylvalerate) and of (2R)-2,3-dihydroxy-3-methylbutanoate (2,3-dihydroxyisovalerate) into 2-oxo-3-methylbutanoate (2-oxoisovalerate), the penultimate precursor to L-isoleucine and L-valine, respectively.</text>
</comment>
<comment type="catalytic activity">
    <reaction evidence="1">
        <text>(2R)-2,3-dihydroxy-3-methylbutanoate = 3-methyl-2-oxobutanoate + H2O</text>
        <dbReference type="Rhea" id="RHEA:24809"/>
        <dbReference type="ChEBI" id="CHEBI:11851"/>
        <dbReference type="ChEBI" id="CHEBI:15377"/>
        <dbReference type="ChEBI" id="CHEBI:49072"/>
        <dbReference type="EC" id="4.2.1.9"/>
    </reaction>
    <physiologicalReaction direction="left-to-right" evidence="1">
        <dbReference type="Rhea" id="RHEA:24810"/>
    </physiologicalReaction>
</comment>
<comment type="catalytic activity">
    <reaction evidence="1">
        <text>(2R,3R)-2,3-dihydroxy-3-methylpentanoate = (S)-3-methyl-2-oxopentanoate + H2O</text>
        <dbReference type="Rhea" id="RHEA:27694"/>
        <dbReference type="ChEBI" id="CHEBI:15377"/>
        <dbReference type="ChEBI" id="CHEBI:35146"/>
        <dbReference type="ChEBI" id="CHEBI:49258"/>
        <dbReference type="EC" id="4.2.1.9"/>
    </reaction>
    <physiologicalReaction direction="left-to-right" evidence="1">
        <dbReference type="Rhea" id="RHEA:27695"/>
    </physiologicalReaction>
</comment>
<comment type="cofactor">
    <cofactor evidence="1">
        <name>[2Fe-2S] cluster</name>
        <dbReference type="ChEBI" id="CHEBI:190135"/>
    </cofactor>
    <text evidence="1">Binds 1 [2Fe-2S] cluster per subunit. This cluster acts as a Lewis acid cofactor.</text>
</comment>
<comment type="cofactor">
    <cofactor evidence="1">
        <name>Mg(2+)</name>
        <dbReference type="ChEBI" id="CHEBI:18420"/>
    </cofactor>
</comment>
<comment type="pathway">
    <text evidence="1">Amino-acid biosynthesis; L-isoleucine biosynthesis; L-isoleucine from 2-oxobutanoate: step 3/4.</text>
</comment>
<comment type="pathway">
    <text evidence="1">Amino-acid biosynthesis; L-valine biosynthesis; L-valine from pyruvate: step 3/4.</text>
</comment>
<comment type="subunit">
    <text evidence="1">Homodimer.</text>
</comment>
<comment type="disruption phenotype">
    <text evidence="2">Does not nodulate the roots of pea plants.</text>
</comment>
<comment type="similarity">
    <text evidence="1">Belongs to the IlvD/Edd family.</text>
</comment>
<dbReference type="EC" id="4.2.1.9" evidence="1"/>
<dbReference type="EMBL" id="AM236080">
    <property type="protein sequence ID" value="CAK07298.1"/>
    <property type="molecule type" value="Genomic_DNA"/>
</dbReference>
<dbReference type="RefSeq" id="WP_011651429.1">
    <property type="nucleotide sequence ID" value="NC_008380.1"/>
</dbReference>
<dbReference type="SMR" id="Q1MIB2"/>
<dbReference type="EnsemblBacteria" id="CAK07298">
    <property type="protein sequence ID" value="CAK07298"/>
    <property type="gene ID" value="RL1803"/>
</dbReference>
<dbReference type="KEGG" id="rle:RL1803"/>
<dbReference type="eggNOG" id="COG0129">
    <property type="taxonomic scope" value="Bacteria"/>
</dbReference>
<dbReference type="HOGENOM" id="CLU_014271_4_2_5"/>
<dbReference type="UniPathway" id="UPA00047">
    <property type="reaction ID" value="UER00057"/>
</dbReference>
<dbReference type="UniPathway" id="UPA00049">
    <property type="reaction ID" value="UER00061"/>
</dbReference>
<dbReference type="Proteomes" id="UP000006575">
    <property type="component" value="Chromosome"/>
</dbReference>
<dbReference type="GO" id="GO:0005829">
    <property type="term" value="C:cytosol"/>
    <property type="evidence" value="ECO:0007669"/>
    <property type="project" value="TreeGrafter"/>
</dbReference>
<dbReference type="GO" id="GO:0051537">
    <property type="term" value="F:2 iron, 2 sulfur cluster binding"/>
    <property type="evidence" value="ECO:0007669"/>
    <property type="project" value="UniProtKB-UniRule"/>
</dbReference>
<dbReference type="GO" id="GO:0004160">
    <property type="term" value="F:dihydroxy-acid dehydratase activity"/>
    <property type="evidence" value="ECO:0007669"/>
    <property type="project" value="UniProtKB-UniRule"/>
</dbReference>
<dbReference type="GO" id="GO:0000287">
    <property type="term" value="F:magnesium ion binding"/>
    <property type="evidence" value="ECO:0007669"/>
    <property type="project" value="UniProtKB-UniRule"/>
</dbReference>
<dbReference type="GO" id="GO:0009097">
    <property type="term" value="P:isoleucine biosynthetic process"/>
    <property type="evidence" value="ECO:0007669"/>
    <property type="project" value="UniProtKB-UniRule"/>
</dbReference>
<dbReference type="GO" id="GO:0009099">
    <property type="term" value="P:L-valine biosynthetic process"/>
    <property type="evidence" value="ECO:0007669"/>
    <property type="project" value="UniProtKB-UniRule"/>
</dbReference>
<dbReference type="FunFam" id="3.50.30.80:FF:000001">
    <property type="entry name" value="Dihydroxy-acid dehydratase"/>
    <property type="match status" value="1"/>
</dbReference>
<dbReference type="Gene3D" id="3.50.30.80">
    <property type="entry name" value="IlvD/EDD C-terminal domain-like"/>
    <property type="match status" value="1"/>
</dbReference>
<dbReference type="HAMAP" id="MF_00012">
    <property type="entry name" value="IlvD"/>
    <property type="match status" value="1"/>
</dbReference>
<dbReference type="InterPro" id="IPR042096">
    <property type="entry name" value="Dihydro-acid_dehy_C"/>
</dbReference>
<dbReference type="InterPro" id="IPR004404">
    <property type="entry name" value="DihydroxyA_deHydtase"/>
</dbReference>
<dbReference type="InterPro" id="IPR020558">
    <property type="entry name" value="DiOHA_6PGluconate_deHydtase_CS"/>
</dbReference>
<dbReference type="InterPro" id="IPR056740">
    <property type="entry name" value="ILV_EDD_C"/>
</dbReference>
<dbReference type="InterPro" id="IPR000581">
    <property type="entry name" value="ILV_EDD_N"/>
</dbReference>
<dbReference type="InterPro" id="IPR037237">
    <property type="entry name" value="IlvD/EDD_N"/>
</dbReference>
<dbReference type="NCBIfam" id="TIGR00110">
    <property type="entry name" value="ilvD"/>
    <property type="match status" value="1"/>
</dbReference>
<dbReference type="NCBIfam" id="NF009103">
    <property type="entry name" value="PRK12448.1"/>
    <property type="match status" value="1"/>
</dbReference>
<dbReference type="PANTHER" id="PTHR43661">
    <property type="entry name" value="D-XYLONATE DEHYDRATASE"/>
    <property type="match status" value="1"/>
</dbReference>
<dbReference type="PANTHER" id="PTHR43661:SF3">
    <property type="entry name" value="D-XYLONATE DEHYDRATASE YAGF-RELATED"/>
    <property type="match status" value="1"/>
</dbReference>
<dbReference type="Pfam" id="PF24877">
    <property type="entry name" value="ILV_EDD_C"/>
    <property type="match status" value="1"/>
</dbReference>
<dbReference type="Pfam" id="PF00920">
    <property type="entry name" value="ILVD_EDD_N"/>
    <property type="match status" value="1"/>
</dbReference>
<dbReference type="SUPFAM" id="SSF143975">
    <property type="entry name" value="IlvD/EDD N-terminal domain-like"/>
    <property type="match status" value="1"/>
</dbReference>
<dbReference type="SUPFAM" id="SSF52016">
    <property type="entry name" value="LeuD/IlvD-like"/>
    <property type="match status" value="1"/>
</dbReference>
<dbReference type="PROSITE" id="PS00886">
    <property type="entry name" value="ILVD_EDD_1"/>
    <property type="match status" value="1"/>
</dbReference>
<dbReference type="PROSITE" id="PS00887">
    <property type="entry name" value="ILVD_EDD_2"/>
    <property type="match status" value="1"/>
</dbReference>
<keyword id="KW-0001">2Fe-2S</keyword>
<keyword id="KW-0028">Amino-acid biosynthesis</keyword>
<keyword id="KW-0100">Branched-chain amino acid biosynthesis</keyword>
<keyword id="KW-0408">Iron</keyword>
<keyword id="KW-0411">Iron-sulfur</keyword>
<keyword id="KW-0456">Lyase</keyword>
<keyword id="KW-0460">Magnesium</keyword>
<keyword id="KW-0479">Metal-binding</keyword>
<organism>
    <name type="scientific">Rhizobium johnstonii (strain DSM 114642 / LMG 32736 / 3841)</name>
    <name type="common">Rhizobium leguminosarum bv. viciae</name>
    <dbReference type="NCBI Taxonomy" id="216596"/>
    <lineage>
        <taxon>Bacteria</taxon>
        <taxon>Pseudomonadati</taxon>
        <taxon>Pseudomonadota</taxon>
        <taxon>Alphaproteobacteria</taxon>
        <taxon>Hyphomicrobiales</taxon>
        <taxon>Rhizobiaceae</taxon>
        <taxon>Rhizobium/Agrobacterium group</taxon>
        <taxon>Rhizobium</taxon>
        <taxon>Rhizobium johnstonii</taxon>
    </lineage>
</organism>
<name>ILVD_RHIJ3</name>
<sequence>MPVYRSRTTTHGRNMAGARGLWRATGMKDSDFGKPIIAVVNSFTQFVPGHVHLKDLGQLVAREIEAAGGVAKEFNTIAVDDGIAMGHDGMLYSLPSRELIADSVEYMVNAHCADAMVCISNCDKITPGMLMASLRLNIPTVFVSGGPMEAGKVVMHGKTHALDLVDAMVAAADDKISDEDVQTIERSACPTCGSCSGMFTANSMNCLTEALGLSLPGNGSTLATHLDRKRLFVEAGHLIVDLARRYYEQDDVKALPRTIASKQAFENAMTLDIAMGGSTNTVLHILAAAHEGEIDFTMADIDALSRRVPCLSKVAPAKSDVHMEDVHRAGGIMSILGELDKGGLLNRDCPTVHAETLGDAIDRWDITRTNSETVRKFYRAAPGGIPTQVAFSQEARWDELDTDRENGVIRSVEHPFSKDGGLAVLKGNLAIDGCIVKTAGVDESILKFSGPARVFESQDASVKAILANEVKAGDVVVIRYEGPKGGPGMQEMLYPTSYLKSKGLGKACALITDGRFSGGTSGLSIGHASPEAANGGTIGLVREGDMIDIDIPNRTISLRVSETELAARRAEQDAKGWYPTEVRKRNVTTALKAYAAFATSADRGAVRDLNVR</sequence>
<protein>
    <recommendedName>
        <fullName evidence="1">Dihydroxy-acid dehydratase</fullName>
        <shortName evidence="1">DAD</shortName>
        <ecNumber evidence="1">4.2.1.9</ecNumber>
    </recommendedName>
</protein>
<gene>
    <name evidence="1" type="primary">ilvD</name>
    <name type="ordered locus">RL1803</name>
</gene>
<accession>Q1MIB2</accession>
<evidence type="ECO:0000255" key="1">
    <source>
        <dbReference type="HAMAP-Rule" id="MF_00012"/>
    </source>
</evidence>
<evidence type="ECO:0000269" key="2">
    <source>
    </source>
</evidence>
<evidence type="ECO:0000303" key="3">
    <source>
    </source>
</evidence>
<feature type="chain" id="PRO_1000001044" description="Dihydroxy-acid dehydratase">
    <location>
        <begin position="1"/>
        <end position="612"/>
    </location>
</feature>
<feature type="active site" description="Proton acceptor" evidence="1">
    <location>
        <position position="517"/>
    </location>
</feature>
<feature type="binding site" evidence="1">
    <location>
        <position position="81"/>
    </location>
    <ligand>
        <name>Mg(2+)</name>
        <dbReference type="ChEBI" id="CHEBI:18420"/>
    </ligand>
</feature>
<feature type="binding site" evidence="1">
    <location>
        <position position="122"/>
    </location>
    <ligand>
        <name>[2Fe-2S] cluster</name>
        <dbReference type="ChEBI" id="CHEBI:190135"/>
    </ligand>
</feature>
<feature type="binding site" evidence="1">
    <location>
        <position position="123"/>
    </location>
    <ligand>
        <name>Mg(2+)</name>
        <dbReference type="ChEBI" id="CHEBI:18420"/>
    </ligand>
</feature>
<feature type="binding site" description="via carbamate group" evidence="1">
    <location>
        <position position="124"/>
    </location>
    <ligand>
        <name>Mg(2+)</name>
        <dbReference type="ChEBI" id="CHEBI:18420"/>
    </ligand>
</feature>
<feature type="binding site" evidence="1">
    <location>
        <position position="195"/>
    </location>
    <ligand>
        <name>[2Fe-2S] cluster</name>
        <dbReference type="ChEBI" id="CHEBI:190135"/>
    </ligand>
</feature>
<feature type="binding site" evidence="1">
    <location>
        <position position="491"/>
    </location>
    <ligand>
        <name>Mg(2+)</name>
        <dbReference type="ChEBI" id="CHEBI:18420"/>
    </ligand>
</feature>
<feature type="modified residue" description="N6-carboxylysine" evidence="1">
    <location>
        <position position="124"/>
    </location>
</feature>